<evidence type="ECO:0000255" key="1">
    <source>
        <dbReference type="HAMAP-Rule" id="MF_00298"/>
    </source>
</evidence>
<name>RPPH_PSEA8</name>
<keyword id="KW-0378">Hydrolase</keyword>
<feature type="chain" id="PRO_1000119476" description="RNA pyrophosphohydrolase">
    <location>
        <begin position="1"/>
        <end position="159"/>
    </location>
</feature>
<feature type="domain" description="Nudix hydrolase" evidence="1">
    <location>
        <begin position="6"/>
        <end position="149"/>
    </location>
</feature>
<feature type="short sequence motif" description="Nudix box">
    <location>
        <begin position="38"/>
        <end position="59"/>
    </location>
</feature>
<dbReference type="EC" id="3.6.1.-" evidence="1"/>
<dbReference type="EMBL" id="FM209186">
    <property type="protein sequence ID" value="CAW25060.1"/>
    <property type="molecule type" value="Genomic_DNA"/>
</dbReference>
<dbReference type="RefSeq" id="WP_003084400.1">
    <property type="nucleotide sequence ID" value="NC_011770.1"/>
</dbReference>
<dbReference type="SMR" id="B7V2P9"/>
<dbReference type="KEGG" id="pag:PLES_03331"/>
<dbReference type="HOGENOM" id="CLU_087195_3_1_6"/>
<dbReference type="GO" id="GO:0005737">
    <property type="term" value="C:cytoplasm"/>
    <property type="evidence" value="ECO:0007669"/>
    <property type="project" value="TreeGrafter"/>
</dbReference>
<dbReference type="GO" id="GO:0034353">
    <property type="term" value="F:mRNA 5'-diphosphatase activity"/>
    <property type="evidence" value="ECO:0007669"/>
    <property type="project" value="TreeGrafter"/>
</dbReference>
<dbReference type="GO" id="GO:0006402">
    <property type="term" value="P:mRNA catabolic process"/>
    <property type="evidence" value="ECO:0007669"/>
    <property type="project" value="TreeGrafter"/>
</dbReference>
<dbReference type="CDD" id="cd03671">
    <property type="entry name" value="NUDIX_Ap4A_hydrolase_plant_like"/>
    <property type="match status" value="1"/>
</dbReference>
<dbReference type="FunFam" id="3.90.79.10:FF:000001">
    <property type="entry name" value="RNA pyrophosphohydrolase"/>
    <property type="match status" value="1"/>
</dbReference>
<dbReference type="Gene3D" id="3.90.79.10">
    <property type="entry name" value="Nucleoside Triphosphate Pyrophosphohydrolase"/>
    <property type="match status" value="1"/>
</dbReference>
<dbReference type="HAMAP" id="MF_00298">
    <property type="entry name" value="Nudix_RppH"/>
    <property type="match status" value="1"/>
</dbReference>
<dbReference type="InterPro" id="IPR020476">
    <property type="entry name" value="Nudix_hydrolase"/>
</dbReference>
<dbReference type="InterPro" id="IPR015797">
    <property type="entry name" value="NUDIX_hydrolase-like_dom_sf"/>
</dbReference>
<dbReference type="InterPro" id="IPR020084">
    <property type="entry name" value="NUDIX_hydrolase_CS"/>
</dbReference>
<dbReference type="InterPro" id="IPR000086">
    <property type="entry name" value="NUDIX_hydrolase_dom"/>
</dbReference>
<dbReference type="InterPro" id="IPR022927">
    <property type="entry name" value="RppH"/>
</dbReference>
<dbReference type="NCBIfam" id="NF001934">
    <property type="entry name" value="PRK00714.1-1"/>
    <property type="match status" value="1"/>
</dbReference>
<dbReference type="NCBIfam" id="NF001937">
    <property type="entry name" value="PRK00714.1-4"/>
    <property type="match status" value="1"/>
</dbReference>
<dbReference type="NCBIfam" id="NF001938">
    <property type="entry name" value="PRK00714.1-5"/>
    <property type="match status" value="1"/>
</dbReference>
<dbReference type="PANTHER" id="PTHR23114">
    <property type="entry name" value="M7GPPPN-MRNA HYDROLASE"/>
    <property type="match status" value="1"/>
</dbReference>
<dbReference type="PANTHER" id="PTHR23114:SF17">
    <property type="entry name" value="M7GPPPN-MRNA HYDROLASE"/>
    <property type="match status" value="1"/>
</dbReference>
<dbReference type="Pfam" id="PF00293">
    <property type="entry name" value="NUDIX"/>
    <property type="match status" value="1"/>
</dbReference>
<dbReference type="PRINTS" id="PR00502">
    <property type="entry name" value="NUDIXFAMILY"/>
</dbReference>
<dbReference type="SUPFAM" id="SSF55811">
    <property type="entry name" value="Nudix"/>
    <property type="match status" value="1"/>
</dbReference>
<dbReference type="PROSITE" id="PS51462">
    <property type="entry name" value="NUDIX"/>
    <property type="match status" value="1"/>
</dbReference>
<dbReference type="PROSITE" id="PS00893">
    <property type="entry name" value="NUDIX_BOX"/>
    <property type="match status" value="1"/>
</dbReference>
<sequence>MIDSDGFRPNVGIILANEAGQVLWARRINQEAWQFPQGGINDRETPEEALYRELNEEVGLEAGDVRILACTRGWLRYRLPQRLVRTHSQPLCIGQKQKWFLLRLMSDEARVRMDITSKPEFDGWRWVSYWYPLGQVVTFKREVYRRALKELAPRLLARD</sequence>
<protein>
    <recommendedName>
        <fullName evidence="1">RNA pyrophosphohydrolase</fullName>
        <ecNumber evidence="1">3.6.1.-</ecNumber>
    </recommendedName>
    <alternativeName>
        <fullName evidence="1">(Di)nucleoside polyphosphate hydrolase</fullName>
    </alternativeName>
</protein>
<comment type="function">
    <text evidence="1">Accelerates the degradation of transcripts by removing pyrophosphate from the 5'-end of triphosphorylated RNA, leading to a more labile monophosphorylated state that can stimulate subsequent ribonuclease cleavage.</text>
</comment>
<comment type="cofactor">
    <cofactor evidence="1">
        <name>a divalent metal cation</name>
        <dbReference type="ChEBI" id="CHEBI:60240"/>
    </cofactor>
</comment>
<comment type="similarity">
    <text evidence="1">Belongs to the Nudix hydrolase family. RppH subfamily.</text>
</comment>
<proteinExistence type="inferred from homology"/>
<reference key="1">
    <citation type="journal article" date="2009" name="Genome Res.">
        <title>Newly introduced genomic prophage islands are critical determinants of in vivo competitiveness in the Liverpool epidemic strain of Pseudomonas aeruginosa.</title>
        <authorList>
            <person name="Winstanley C."/>
            <person name="Langille M.G.I."/>
            <person name="Fothergill J.L."/>
            <person name="Kukavica-Ibrulj I."/>
            <person name="Paradis-Bleau C."/>
            <person name="Sanschagrin F."/>
            <person name="Thomson N.R."/>
            <person name="Winsor G.L."/>
            <person name="Quail M.A."/>
            <person name="Lennard N."/>
            <person name="Bignell A."/>
            <person name="Clarke L."/>
            <person name="Seeger K."/>
            <person name="Saunders D."/>
            <person name="Harris D."/>
            <person name="Parkhill J."/>
            <person name="Hancock R.E.W."/>
            <person name="Brinkman F.S.L."/>
            <person name="Levesque R.C."/>
        </authorList>
    </citation>
    <scope>NUCLEOTIDE SEQUENCE [LARGE SCALE GENOMIC DNA]</scope>
    <source>
        <strain>LESB58</strain>
    </source>
</reference>
<organism>
    <name type="scientific">Pseudomonas aeruginosa (strain LESB58)</name>
    <dbReference type="NCBI Taxonomy" id="557722"/>
    <lineage>
        <taxon>Bacteria</taxon>
        <taxon>Pseudomonadati</taxon>
        <taxon>Pseudomonadota</taxon>
        <taxon>Gammaproteobacteria</taxon>
        <taxon>Pseudomonadales</taxon>
        <taxon>Pseudomonadaceae</taxon>
        <taxon>Pseudomonas</taxon>
    </lineage>
</organism>
<gene>
    <name evidence="1" type="primary">rppH</name>
    <name evidence="1" type="synonym">nudH</name>
    <name type="ordered locus">PLES_03331</name>
</gene>
<accession>B7V2P9</accession>